<proteinExistence type="inferred from homology"/>
<gene>
    <name evidence="1" type="primary">ndhN</name>
    <name type="ordered locus">P9215_18311</name>
</gene>
<comment type="function">
    <text evidence="1">NDH-1 shuttles electrons from an unknown electron donor, via FMN and iron-sulfur (Fe-S) centers, to quinones in the respiratory and/or the photosynthetic chain. The immediate electron acceptor for the enzyme in this species is believed to be plastoquinone. Couples the redox reaction to proton translocation, and thus conserves the redox energy in a proton gradient. Cyanobacterial NDH-1 also plays a role in inorganic carbon-concentration.</text>
</comment>
<comment type="catalytic activity">
    <reaction evidence="1">
        <text>a plastoquinone + NADH + (n+1) H(+)(in) = a plastoquinol + NAD(+) + n H(+)(out)</text>
        <dbReference type="Rhea" id="RHEA:42608"/>
        <dbReference type="Rhea" id="RHEA-COMP:9561"/>
        <dbReference type="Rhea" id="RHEA-COMP:9562"/>
        <dbReference type="ChEBI" id="CHEBI:15378"/>
        <dbReference type="ChEBI" id="CHEBI:17757"/>
        <dbReference type="ChEBI" id="CHEBI:57540"/>
        <dbReference type="ChEBI" id="CHEBI:57945"/>
        <dbReference type="ChEBI" id="CHEBI:62192"/>
    </reaction>
</comment>
<comment type="catalytic activity">
    <reaction evidence="1">
        <text>a plastoquinone + NADPH + (n+1) H(+)(in) = a plastoquinol + NADP(+) + n H(+)(out)</text>
        <dbReference type="Rhea" id="RHEA:42612"/>
        <dbReference type="Rhea" id="RHEA-COMP:9561"/>
        <dbReference type="Rhea" id="RHEA-COMP:9562"/>
        <dbReference type="ChEBI" id="CHEBI:15378"/>
        <dbReference type="ChEBI" id="CHEBI:17757"/>
        <dbReference type="ChEBI" id="CHEBI:57783"/>
        <dbReference type="ChEBI" id="CHEBI:58349"/>
        <dbReference type="ChEBI" id="CHEBI:62192"/>
    </reaction>
</comment>
<comment type="subunit">
    <text evidence="1">NDH-1 can be composed of about 15 different subunits; different subcomplexes with different compositions have been identified which probably have different functions.</text>
</comment>
<comment type="subcellular location">
    <subcellularLocation>
        <location evidence="1">Cellular thylakoid membrane</location>
        <topology evidence="1">Peripheral membrane protein</topology>
        <orientation evidence="1">Cytoplasmic side</orientation>
    </subcellularLocation>
</comment>
<comment type="similarity">
    <text evidence="1">Belongs to the complex I NdhN subunit family.</text>
</comment>
<sequence>MPLLLTGKKFHNDLKTNKCLAIFAPLEGGYETRLLRRMRAKGFKTFITSARGLGDPEVFLLKLHGVRPPHLGHQSVGRNGALGEVQQVIPQASELFNENDKNKLLWLLEGQVLSQSELESLIEICTNDNKLTIVVEMGGSRKLEWKPLSNYILDEFES</sequence>
<accession>A8G763</accession>
<evidence type="ECO:0000255" key="1">
    <source>
        <dbReference type="HAMAP-Rule" id="MF_01353"/>
    </source>
</evidence>
<reference key="1">
    <citation type="journal article" date="2007" name="PLoS Genet.">
        <title>Patterns and implications of gene gain and loss in the evolution of Prochlorococcus.</title>
        <authorList>
            <person name="Kettler G.C."/>
            <person name="Martiny A.C."/>
            <person name="Huang K."/>
            <person name="Zucker J."/>
            <person name="Coleman M.L."/>
            <person name="Rodrigue S."/>
            <person name="Chen F."/>
            <person name="Lapidus A."/>
            <person name="Ferriera S."/>
            <person name="Johnson J."/>
            <person name="Steglich C."/>
            <person name="Church G.M."/>
            <person name="Richardson P."/>
            <person name="Chisholm S.W."/>
        </authorList>
    </citation>
    <scope>NUCLEOTIDE SEQUENCE [LARGE SCALE GENOMIC DNA]</scope>
    <source>
        <strain>MIT 9215</strain>
    </source>
</reference>
<protein>
    <recommendedName>
        <fullName evidence="1">NAD(P)H-quinone oxidoreductase subunit N</fullName>
        <ecNumber evidence="1">7.1.1.-</ecNumber>
    </recommendedName>
    <alternativeName>
        <fullName evidence="1">NAD(P)H dehydrogenase I subunit N</fullName>
        <shortName evidence="1">NDH-1 subunit N</shortName>
        <shortName evidence="1">NDH-N</shortName>
    </alternativeName>
</protein>
<keyword id="KW-0472">Membrane</keyword>
<keyword id="KW-0520">NAD</keyword>
<keyword id="KW-0521">NADP</keyword>
<keyword id="KW-0618">Plastoquinone</keyword>
<keyword id="KW-0874">Quinone</keyword>
<keyword id="KW-0793">Thylakoid</keyword>
<keyword id="KW-1278">Translocase</keyword>
<keyword id="KW-0813">Transport</keyword>
<organism>
    <name type="scientific">Prochlorococcus marinus (strain MIT 9215)</name>
    <dbReference type="NCBI Taxonomy" id="93060"/>
    <lineage>
        <taxon>Bacteria</taxon>
        <taxon>Bacillati</taxon>
        <taxon>Cyanobacteriota</taxon>
        <taxon>Cyanophyceae</taxon>
        <taxon>Synechococcales</taxon>
        <taxon>Prochlorococcaceae</taxon>
        <taxon>Prochlorococcus</taxon>
    </lineage>
</organism>
<dbReference type="EC" id="7.1.1.-" evidence="1"/>
<dbReference type="EMBL" id="CP000825">
    <property type="protein sequence ID" value="ABV51444.1"/>
    <property type="molecule type" value="Genomic_DNA"/>
</dbReference>
<dbReference type="RefSeq" id="WP_002807100.1">
    <property type="nucleotide sequence ID" value="NC_009840.1"/>
</dbReference>
<dbReference type="SMR" id="A8G763"/>
<dbReference type="STRING" id="93060.P9215_18311"/>
<dbReference type="KEGG" id="pmh:P9215_18311"/>
<dbReference type="eggNOG" id="ENOG5033TWM">
    <property type="taxonomic scope" value="Bacteria"/>
</dbReference>
<dbReference type="HOGENOM" id="CLU_087432_0_0_3"/>
<dbReference type="OrthoDB" id="510798at2"/>
<dbReference type="Proteomes" id="UP000002014">
    <property type="component" value="Chromosome"/>
</dbReference>
<dbReference type="GO" id="GO:0031676">
    <property type="term" value="C:plasma membrane-derived thylakoid membrane"/>
    <property type="evidence" value="ECO:0007669"/>
    <property type="project" value="UniProtKB-SubCell"/>
</dbReference>
<dbReference type="GO" id="GO:0016655">
    <property type="term" value="F:oxidoreductase activity, acting on NAD(P)H, quinone or similar compound as acceptor"/>
    <property type="evidence" value="ECO:0007669"/>
    <property type="project" value="UniProtKB-UniRule"/>
</dbReference>
<dbReference type="GO" id="GO:0048038">
    <property type="term" value="F:quinone binding"/>
    <property type="evidence" value="ECO:0007669"/>
    <property type="project" value="UniProtKB-KW"/>
</dbReference>
<dbReference type="HAMAP" id="MF_01353">
    <property type="entry name" value="NDH1_NDH1N"/>
    <property type="match status" value="1"/>
</dbReference>
<dbReference type="InterPro" id="IPR020874">
    <property type="entry name" value="NAD(P)H-quinone_OxRdtase_su_N"/>
</dbReference>
<dbReference type="PANTHER" id="PTHR35515">
    <property type="entry name" value="NAD(P)H-QUINONE OXIDOREDUCTASE SUBUNIT N, CHLOROPLASTIC"/>
    <property type="match status" value="1"/>
</dbReference>
<dbReference type="PANTHER" id="PTHR35515:SF1">
    <property type="entry name" value="NAD(P)H-QUINONE OXIDOREDUCTASE SUBUNIT N, CHLOROPLASTIC"/>
    <property type="match status" value="1"/>
</dbReference>
<dbReference type="Pfam" id="PF11909">
    <property type="entry name" value="NdhN"/>
    <property type="match status" value="1"/>
</dbReference>
<name>NDHN_PROM2</name>
<feature type="chain" id="PRO_0000352222" description="NAD(P)H-quinone oxidoreductase subunit N">
    <location>
        <begin position="1"/>
        <end position="158"/>
    </location>
</feature>